<sequence>MRKIIHIDMDCFFAAVEMRDNPALRDIPIAIGGSRERRGAISTANYPARQFGVRSAMPTAMALKLCPHLTLLPGRFDAYKEASRHVRDIFSRYTSLIEPLSLDEAWLDVTDSPHCYGSATLIAREIRQTIFNELQLTASAGVAPVKFLAKIASDLNKPNGQYVITPADVPGFLKTLPLAKIPGVGKVSAAKLENMGLRTCGDIQQCDLAMLLKRFGKFGRVLWERSQGIDERDVNSERLRKSVGVERTLAEDIHEWSDCEAIIEHLYPELERRLAIVKPDLLIARQGVKLKFNDFQQTTQEHVWPQLNKEDLITTARKTWDERRGERGVRLVGLHVTLLDPQLERQLVLGL</sequence>
<gene>
    <name evidence="1" type="primary">dinB</name>
    <name type="ordered locus">SPA2442</name>
</gene>
<protein>
    <recommendedName>
        <fullName evidence="1">DNA polymerase IV</fullName>
        <shortName evidence="1">Pol IV</shortName>
        <ecNumber evidence="1">2.7.7.7</ecNumber>
    </recommendedName>
</protein>
<accession>Q5PF76</accession>
<proteinExistence type="inferred from homology"/>
<keyword id="KW-0963">Cytoplasm</keyword>
<keyword id="KW-0227">DNA damage</keyword>
<keyword id="KW-0234">DNA repair</keyword>
<keyword id="KW-0235">DNA replication</keyword>
<keyword id="KW-0238">DNA-binding</keyword>
<keyword id="KW-0239">DNA-directed DNA polymerase</keyword>
<keyword id="KW-0460">Magnesium</keyword>
<keyword id="KW-0479">Metal-binding</keyword>
<keyword id="KW-0515">Mutator protein</keyword>
<keyword id="KW-0548">Nucleotidyltransferase</keyword>
<keyword id="KW-0808">Transferase</keyword>
<feature type="chain" id="PRO_1000084922" description="DNA polymerase IV">
    <location>
        <begin position="1"/>
        <end position="351"/>
    </location>
</feature>
<feature type="domain" description="UmuC" evidence="1">
    <location>
        <begin position="4"/>
        <end position="185"/>
    </location>
</feature>
<feature type="active site" evidence="1">
    <location>
        <position position="104"/>
    </location>
</feature>
<feature type="binding site" evidence="1">
    <location>
        <position position="8"/>
    </location>
    <ligand>
        <name>Mg(2+)</name>
        <dbReference type="ChEBI" id="CHEBI:18420"/>
    </ligand>
</feature>
<feature type="binding site" evidence="1">
    <location>
        <position position="103"/>
    </location>
    <ligand>
        <name>Mg(2+)</name>
        <dbReference type="ChEBI" id="CHEBI:18420"/>
    </ligand>
</feature>
<feature type="site" description="Substrate discrimination" evidence="1">
    <location>
        <position position="13"/>
    </location>
</feature>
<name>DPO4_SALPA</name>
<comment type="function">
    <text evidence="1">Poorly processive, error-prone DNA polymerase involved in untargeted mutagenesis. Copies undamaged DNA at stalled replication forks, which arise in vivo from mismatched or misaligned primer ends. These misaligned primers can be extended by PolIV. Exhibits no 3'-5' exonuclease (proofreading) activity. May be involved in translesional synthesis, in conjunction with the beta clamp from PolIII.</text>
</comment>
<comment type="catalytic activity">
    <reaction evidence="1">
        <text>DNA(n) + a 2'-deoxyribonucleoside 5'-triphosphate = DNA(n+1) + diphosphate</text>
        <dbReference type="Rhea" id="RHEA:22508"/>
        <dbReference type="Rhea" id="RHEA-COMP:17339"/>
        <dbReference type="Rhea" id="RHEA-COMP:17340"/>
        <dbReference type="ChEBI" id="CHEBI:33019"/>
        <dbReference type="ChEBI" id="CHEBI:61560"/>
        <dbReference type="ChEBI" id="CHEBI:173112"/>
        <dbReference type="EC" id="2.7.7.7"/>
    </reaction>
</comment>
<comment type="cofactor">
    <cofactor evidence="1">
        <name>Mg(2+)</name>
        <dbReference type="ChEBI" id="CHEBI:18420"/>
    </cofactor>
    <text evidence="1">Binds 2 magnesium ions per subunit.</text>
</comment>
<comment type="subunit">
    <text evidence="1">Monomer.</text>
</comment>
<comment type="subcellular location">
    <subcellularLocation>
        <location evidence="1">Cytoplasm</location>
    </subcellularLocation>
</comment>
<comment type="similarity">
    <text evidence="1">Belongs to the DNA polymerase type-Y family.</text>
</comment>
<dbReference type="EC" id="2.7.7.7" evidence="1"/>
<dbReference type="EMBL" id="CP000026">
    <property type="protein sequence ID" value="AAV78322.1"/>
    <property type="molecule type" value="Genomic_DNA"/>
</dbReference>
<dbReference type="RefSeq" id="WP_001226147.1">
    <property type="nucleotide sequence ID" value="NC_006511.1"/>
</dbReference>
<dbReference type="SMR" id="Q5PF76"/>
<dbReference type="KEGG" id="spt:SPA2442"/>
<dbReference type="HOGENOM" id="CLU_012348_1_2_6"/>
<dbReference type="Proteomes" id="UP000008185">
    <property type="component" value="Chromosome"/>
</dbReference>
<dbReference type="GO" id="GO:0005829">
    <property type="term" value="C:cytosol"/>
    <property type="evidence" value="ECO:0007669"/>
    <property type="project" value="TreeGrafter"/>
</dbReference>
<dbReference type="GO" id="GO:0003684">
    <property type="term" value="F:damaged DNA binding"/>
    <property type="evidence" value="ECO:0007669"/>
    <property type="project" value="InterPro"/>
</dbReference>
<dbReference type="GO" id="GO:0003887">
    <property type="term" value="F:DNA-directed DNA polymerase activity"/>
    <property type="evidence" value="ECO:0007669"/>
    <property type="project" value="UniProtKB-UniRule"/>
</dbReference>
<dbReference type="GO" id="GO:0000287">
    <property type="term" value="F:magnesium ion binding"/>
    <property type="evidence" value="ECO:0007669"/>
    <property type="project" value="UniProtKB-UniRule"/>
</dbReference>
<dbReference type="GO" id="GO:0006261">
    <property type="term" value="P:DNA-templated DNA replication"/>
    <property type="evidence" value="ECO:0007669"/>
    <property type="project" value="UniProtKB-UniRule"/>
</dbReference>
<dbReference type="GO" id="GO:0042276">
    <property type="term" value="P:error-prone translesion synthesis"/>
    <property type="evidence" value="ECO:0007669"/>
    <property type="project" value="TreeGrafter"/>
</dbReference>
<dbReference type="GO" id="GO:0009432">
    <property type="term" value="P:SOS response"/>
    <property type="evidence" value="ECO:0007669"/>
    <property type="project" value="TreeGrafter"/>
</dbReference>
<dbReference type="CDD" id="cd03586">
    <property type="entry name" value="PolY_Pol_IV_kappa"/>
    <property type="match status" value="1"/>
</dbReference>
<dbReference type="FunFam" id="1.10.150.20:FF:000019">
    <property type="entry name" value="DNA polymerase IV"/>
    <property type="match status" value="1"/>
</dbReference>
<dbReference type="FunFam" id="3.30.1490.100:FF:000002">
    <property type="entry name" value="DNA polymerase IV"/>
    <property type="match status" value="1"/>
</dbReference>
<dbReference type="FunFam" id="3.30.70.270:FF:000002">
    <property type="entry name" value="DNA polymerase IV"/>
    <property type="match status" value="1"/>
</dbReference>
<dbReference type="FunFam" id="3.40.1170.60:FF:000001">
    <property type="entry name" value="DNA polymerase IV"/>
    <property type="match status" value="1"/>
</dbReference>
<dbReference type="Gene3D" id="3.30.70.270">
    <property type="match status" value="1"/>
</dbReference>
<dbReference type="Gene3D" id="3.40.1170.60">
    <property type="match status" value="1"/>
</dbReference>
<dbReference type="Gene3D" id="1.10.150.20">
    <property type="entry name" value="5' to 3' exonuclease, C-terminal subdomain"/>
    <property type="match status" value="1"/>
</dbReference>
<dbReference type="Gene3D" id="3.30.1490.100">
    <property type="entry name" value="DNA polymerase, Y-family, little finger domain"/>
    <property type="match status" value="1"/>
</dbReference>
<dbReference type="HAMAP" id="MF_01113">
    <property type="entry name" value="DNApol_IV"/>
    <property type="match status" value="1"/>
</dbReference>
<dbReference type="InterPro" id="IPR043502">
    <property type="entry name" value="DNA/RNA_pol_sf"/>
</dbReference>
<dbReference type="InterPro" id="IPR036775">
    <property type="entry name" value="DNA_pol_Y-fam_lit_finger_sf"/>
</dbReference>
<dbReference type="InterPro" id="IPR017961">
    <property type="entry name" value="DNA_pol_Y-fam_little_finger"/>
</dbReference>
<dbReference type="InterPro" id="IPR050116">
    <property type="entry name" value="DNA_polymerase-Y"/>
</dbReference>
<dbReference type="InterPro" id="IPR022880">
    <property type="entry name" value="DNApol_IV"/>
</dbReference>
<dbReference type="InterPro" id="IPR053848">
    <property type="entry name" value="IMS_HHH_1"/>
</dbReference>
<dbReference type="InterPro" id="IPR043128">
    <property type="entry name" value="Rev_trsase/Diguanyl_cyclase"/>
</dbReference>
<dbReference type="InterPro" id="IPR001126">
    <property type="entry name" value="UmuC"/>
</dbReference>
<dbReference type="NCBIfam" id="NF002677">
    <property type="entry name" value="PRK02406.1"/>
    <property type="match status" value="1"/>
</dbReference>
<dbReference type="PANTHER" id="PTHR11076:SF33">
    <property type="entry name" value="DNA POLYMERASE KAPPA"/>
    <property type="match status" value="1"/>
</dbReference>
<dbReference type="PANTHER" id="PTHR11076">
    <property type="entry name" value="DNA REPAIR POLYMERASE UMUC / TRANSFERASE FAMILY MEMBER"/>
    <property type="match status" value="1"/>
</dbReference>
<dbReference type="Pfam" id="PF00817">
    <property type="entry name" value="IMS"/>
    <property type="match status" value="1"/>
</dbReference>
<dbReference type="Pfam" id="PF11799">
    <property type="entry name" value="IMS_C"/>
    <property type="match status" value="1"/>
</dbReference>
<dbReference type="Pfam" id="PF21999">
    <property type="entry name" value="IMS_HHH_1"/>
    <property type="match status" value="1"/>
</dbReference>
<dbReference type="SUPFAM" id="SSF56672">
    <property type="entry name" value="DNA/RNA polymerases"/>
    <property type="match status" value="1"/>
</dbReference>
<dbReference type="SUPFAM" id="SSF100879">
    <property type="entry name" value="Lesion bypass DNA polymerase (Y-family), little finger domain"/>
    <property type="match status" value="1"/>
</dbReference>
<dbReference type="PROSITE" id="PS50173">
    <property type="entry name" value="UMUC"/>
    <property type="match status" value="1"/>
</dbReference>
<reference key="1">
    <citation type="journal article" date="2004" name="Nat. Genet.">
        <title>Comparison of genome degradation in Paratyphi A and Typhi, human-restricted serovars of Salmonella enterica that cause typhoid.</title>
        <authorList>
            <person name="McClelland M."/>
            <person name="Sanderson K.E."/>
            <person name="Clifton S.W."/>
            <person name="Latreille P."/>
            <person name="Porwollik S."/>
            <person name="Sabo A."/>
            <person name="Meyer R."/>
            <person name="Bieri T."/>
            <person name="Ozersky P."/>
            <person name="McLellan M."/>
            <person name="Harkins C.R."/>
            <person name="Wang C."/>
            <person name="Nguyen C."/>
            <person name="Berghoff A."/>
            <person name="Elliott G."/>
            <person name="Kohlberg S."/>
            <person name="Strong C."/>
            <person name="Du F."/>
            <person name="Carter J."/>
            <person name="Kremizki C."/>
            <person name="Layman D."/>
            <person name="Leonard S."/>
            <person name="Sun H."/>
            <person name="Fulton L."/>
            <person name="Nash W."/>
            <person name="Miner T."/>
            <person name="Minx P."/>
            <person name="Delehaunty K."/>
            <person name="Fronick C."/>
            <person name="Magrini V."/>
            <person name="Nhan M."/>
            <person name="Warren W."/>
            <person name="Florea L."/>
            <person name="Spieth J."/>
            <person name="Wilson R.K."/>
        </authorList>
    </citation>
    <scope>NUCLEOTIDE SEQUENCE [LARGE SCALE GENOMIC DNA]</scope>
    <source>
        <strain>ATCC 9150 / SARB42</strain>
    </source>
</reference>
<evidence type="ECO:0000255" key="1">
    <source>
        <dbReference type="HAMAP-Rule" id="MF_01113"/>
    </source>
</evidence>
<organism>
    <name type="scientific">Salmonella paratyphi A (strain ATCC 9150 / SARB42)</name>
    <dbReference type="NCBI Taxonomy" id="295319"/>
    <lineage>
        <taxon>Bacteria</taxon>
        <taxon>Pseudomonadati</taxon>
        <taxon>Pseudomonadota</taxon>
        <taxon>Gammaproteobacteria</taxon>
        <taxon>Enterobacterales</taxon>
        <taxon>Enterobacteriaceae</taxon>
        <taxon>Salmonella</taxon>
    </lineage>
</organism>